<organism>
    <name type="scientific">Neurospora terricola</name>
    <dbReference type="NCBI Taxonomy" id="88718"/>
    <lineage>
        <taxon>Eukaryota</taxon>
        <taxon>Fungi</taxon>
        <taxon>Dikarya</taxon>
        <taxon>Ascomycota</taxon>
        <taxon>Pezizomycotina</taxon>
        <taxon>Sordariomycetes</taxon>
        <taxon>Sordariomycetidae</taxon>
        <taxon>Sordariales</taxon>
        <taxon>Sordariaceae</taxon>
        <taxon>Neurospora</taxon>
    </lineage>
</organism>
<sequence length="917" mass="100522">MNTIPTRHFGDIAPRDPLSLPPISSSVASGMKRSFTTMAMLYANDSDTGNSDDANARRPPRPLSNSPSTSNYRVGSWSAPNSPPRRALPHHPTTANYDPDASIVIAGIRGAGKSTLAIMASTAMKRKIVDLESEFHHLTGLSSSNYKKRHGLADYGRRHITILQNILNLHRTRAILVCSWLERDVQAMLQDFSTSNPVIYVLRDAKAIEAHLKGYDKSKVGALLDATSAVLRRCTRFEFFNVSEENLDTHSGSASPPAVPDQRHTAPYLTLKRAERHFLKFLSLILPKGTIPFVESAFPLASVPVEQRRFTYALALPISAFLDKGVDIQEFDAGVDAIEIIVDDLATSESGPTSPLGLAPHRASEISRVVGEIRRDTVIPIILHVVFPERALYEEALLALYMAYLSHALRLAPDYLTVDLRLDSGLLGQLTAVKGITKAIGNKQLAQVNSPLWGDPSWLQAYQKAQNTGCDLVRLTRPASGSGDNTDIRQLQVAVEAAGGPRLPLIAYNTGRLGRTSMCFNEILTPVTPEPFKEDTLGLQNSAHRHLQPPLTALEATQALYSAFVHDPMKLYVFGANVGYSLSPAMHNAALKACGISHHYRPLSTTNIGTLREVISDPQFAGASVGLPFKVEIISLTHSLSRHAKAIGAVNTLIPVRHLTADGGIPDEVSMFNNISQAGPVKALYGENTDWIGIRACLRRGLSPANAVRSTSTGLVIGAGGMARAAVYAMLQLGVKKILIFNRTFANAEKLVLHFENLLARDALPLLSTGPRSDDNTCFHIIRSRDEPLPENFKNPTMIVSCIPTHTVDNTPDPEFTVPLHWLDNPTGGIVLELDYKCLTSPLLEQTRREAHRGWVAMDGLDLLPEQGFAQFELFTGRRAPRRLMRREVLRAYPDDQEQSHTAQLQPRLNKIATQIS</sequence>
<gene>
    <name type="primary">qa-1s</name>
</gene>
<reference key="1">
    <citation type="submission" date="2005-04" db="EMBL/GenBank/DDBJ databases">
        <title>Sequence analysis of genes of the quinic acid (qa) cluster of two homothallic Neurospora species.</title>
        <authorList>
            <person name="Arnett D.R."/>
            <person name="Asch D.K."/>
        </authorList>
    </citation>
    <scope>NUCLEOTIDE SEQUENCE [GENOMIC DNA]</scope>
</reference>
<keyword id="KW-0672">Quinate metabolism</keyword>
<keyword id="KW-0678">Repressor</keyword>
<keyword id="KW-0804">Transcription</keyword>
<keyword id="KW-0805">Transcription regulation</keyword>
<name>QUTR_NEUTR</name>
<comment type="function">
    <text evidence="1">Multi-domain repressor protein that negatively regulates transcription of the quinate utilization pathway genes. May mediate its repressor activity by binding directly to the qa-1f activator protein (By similarity).</text>
</comment>
<comment type="domain">
    <text evidence="1">Is homologous throughout its length with the C-terminal 3 domains of the pentafunctional AROM protein. The function of the 2 C-terminal domains may be to act as a molecular sensor that detects the presence of quinate pathway intermediates as a prerequisite for the presumed conformational changes necessary for the control of transcription regulation (By similarity).</text>
</comment>
<comment type="similarity">
    <text evidence="3">In the N-terminal section; belongs to the shikimate kinase family.</text>
</comment>
<comment type="similarity">
    <text evidence="3">In the 2nd section; belongs to the type-I 3-dehydroquinase family.</text>
</comment>
<comment type="similarity">
    <text evidence="3">In the C-terminal section; belongs to the shikimate dehydrogenase family.</text>
</comment>
<protein>
    <recommendedName>
        <fullName>Quinate repressor protein</fullName>
    </recommendedName>
</protein>
<accession>Q4U3U3</accession>
<proteinExistence type="inferred from homology"/>
<feature type="chain" id="PRO_0000260166" description="Quinate repressor protein">
    <location>
        <begin position="1"/>
        <end position="917"/>
    </location>
</feature>
<feature type="region of interest" description="Disordered" evidence="2">
    <location>
        <begin position="1"/>
        <end position="21"/>
    </location>
</feature>
<feature type="region of interest" description="Disordered" evidence="2">
    <location>
        <begin position="45"/>
        <end position="95"/>
    </location>
</feature>
<feature type="region of interest" description="Disordered" evidence="2">
    <location>
        <begin position="895"/>
        <end position="917"/>
    </location>
</feature>
<feature type="compositionally biased region" description="Polar residues" evidence="2">
    <location>
        <begin position="900"/>
        <end position="917"/>
    </location>
</feature>
<evidence type="ECO:0000250" key="1"/>
<evidence type="ECO:0000256" key="2">
    <source>
        <dbReference type="SAM" id="MobiDB-lite"/>
    </source>
</evidence>
<evidence type="ECO:0000305" key="3"/>
<dbReference type="EMBL" id="DQ015973">
    <property type="protein sequence ID" value="AAY41164.1"/>
    <property type="molecule type" value="Genomic_DNA"/>
</dbReference>
<dbReference type="SMR" id="Q4U3U3"/>
<dbReference type="GO" id="GO:0003855">
    <property type="term" value="F:3-dehydroquinate dehydratase activity"/>
    <property type="evidence" value="ECO:0007669"/>
    <property type="project" value="InterPro"/>
</dbReference>
<dbReference type="GO" id="GO:0003866">
    <property type="term" value="F:3-phosphoshikimate 1-carboxyvinyltransferase activity"/>
    <property type="evidence" value="ECO:0007669"/>
    <property type="project" value="TreeGrafter"/>
</dbReference>
<dbReference type="GO" id="GO:0004764">
    <property type="term" value="F:shikimate 3-dehydrogenase (NADP+) activity"/>
    <property type="evidence" value="ECO:0007669"/>
    <property type="project" value="InterPro"/>
</dbReference>
<dbReference type="GO" id="GO:0009423">
    <property type="term" value="P:chorismate biosynthetic process"/>
    <property type="evidence" value="ECO:0007669"/>
    <property type="project" value="TreeGrafter"/>
</dbReference>
<dbReference type="GO" id="GO:0019630">
    <property type="term" value="P:quinate metabolic process"/>
    <property type="evidence" value="ECO:0007669"/>
    <property type="project" value="UniProtKB-KW"/>
</dbReference>
<dbReference type="CDD" id="cd00502">
    <property type="entry name" value="DHQase_I"/>
    <property type="match status" value="1"/>
</dbReference>
<dbReference type="CDD" id="cd01065">
    <property type="entry name" value="NAD_bind_Shikimate_DH"/>
    <property type="match status" value="1"/>
</dbReference>
<dbReference type="FunFam" id="3.40.50.10860:FF:000019">
    <property type="entry name" value="Quinate pathway repressor protein QutR"/>
    <property type="match status" value="1"/>
</dbReference>
<dbReference type="FunFam" id="3.40.50.300:FF:003173">
    <property type="entry name" value="Quinate repressor protein"/>
    <property type="match status" value="1"/>
</dbReference>
<dbReference type="FunFam" id="3.40.50.720:FF:000386">
    <property type="entry name" value="Quinate repressor protein"/>
    <property type="match status" value="1"/>
</dbReference>
<dbReference type="Gene3D" id="3.20.20.70">
    <property type="entry name" value="Aldolase class I"/>
    <property type="match status" value="1"/>
</dbReference>
<dbReference type="Gene3D" id="3.40.50.10860">
    <property type="entry name" value="Leucine Dehydrogenase, chain A, domain 1"/>
    <property type="match status" value="1"/>
</dbReference>
<dbReference type="Gene3D" id="3.40.50.720">
    <property type="entry name" value="NAD(P)-binding Rossmann-like Domain"/>
    <property type="match status" value="1"/>
</dbReference>
<dbReference type="Gene3D" id="3.40.50.300">
    <property type="entry name" value="P-loop containing nucleotide triphosphate hydrolases"/>
    <property type="match status" value="1"/>
</dbReference>
<dbReference type="InterPro" id="IPR013785">
    <property type="entry name" value="Aldolase_TIM"/>
</dbReference>
<dbReference type="InterPro" id="IPR046346">
    <property type="entry name" value="Aminoacid_DH-like_N_sf"/>
</dbReference>
<dbReference type="InterPro" id="IPR001381">
    <property type="entry name" value="DHquinase_I"/>
</dbReference>
<dbReference type="InterPro" id="IPR036291">
    <property type="entry name" value="NAD(P)-bd_dom_sf"/>
</dbReference>
<dbReference type="InterPro" id="IPR027417">
    <property type="entry name" value="P-loop_NTPase"/>
</dbReference>
<dbReference type="InterPro" id="IPR041121">
    <property type="entry name" value="SDH_C"/>
</dbReference>
<dbReference type="InterPro" id="IPR031322">
    <property type="entry name" value="Shikimate/glucono_kinase"/>
</dbReference>
<dbReference type="InterPro" id="IPR013708">
    <property type="entry name" value="Shikimate_DH-bd_N"/>
</dbReference>
<dbReference type="InterPro" id="IPR006151">
    <property type="entry name" value="Shikm_DH/Glu-tRNA_Rdtase"/>
</dbReference>
<dbReference type="PANTHER" id="PTHR21090">
    <property type="entry name" value="AROM/DEHYDROQUINATE SYNTHASE"/>
    <property type="match status" value="1"/>
</dbReference>
<dbReference type="PANTHER" id="PTHR21090:SF27">
    <property type="entry name" value="QUINATE REPRESSOR PROTEIN"/>
    <property type="match status" value="1"/>
</dbReference>
<dbReference type="Pfam" id="PF01487">
    <property type="entry name" value="DHquinase_I"/>
    <property type="match status" value="1"/>
</dbReference>
<dbReference type="Pfam" id="PF18317">
    <property type="entry name" value="SDH_C"/>
    <property type="match status" value="1"/>
</dbReference>
<dbReference type="Pfam" id="PF01488">
    <property type="entry name" value="Shikimate_DH"/>
    <property type="match status" value="1"/>
</dbReference>
<dbReference type="Pfam" id="PF08501">
    <property type="entry name" value="Shikimate_dh_N"/>
    <property type="match status" value="1"/>
</dbReference>
<dbReference type="Pfam" id="PF01202">
    <property type="entry name" value="SKI"/>
    <property type="match status" value="1"/>
</dbReference>
<dbReference type="SUPFAM" id="SSF51569">
    <property type="entry name" value="Aldolase"/>
    <property type="match status" value="1"/>
</dbReference>
<dbReference type="SUPFAM" id="SSF53223">
    <property type="entry name" value="Aminoacid dehydrogenase-like, N-terminal domain"/>
    <property type="match status" value="1"/>
</dbReference>
<dbReference type="SUPFAM" id="SSF51735">
    <property type="entry name" value="NAD(P)-binding Rossmann-fold domains"/>
    <property type="match status" value="1"/>
</dbReference>
<dbReference type="SUPFAM" id="SSF52540">
    <property type="entry name" value="P-loop containing nucleoside triphosphate hydrolases"/>
    <property type="match status" value="1"/>
</dbReference>